<gene>
    <name evidence="1" type="primary">mnmE</name>
    <name evidence="1" type="synonym">trmE</name>
    <name type="ordered locus">SERP0003</name>
</gene>
<dbReference type="EC" id="3.6.-.-" evidence="1"/>
<dbReference type="EMBL" id="CP000029">
    <property type="protein sequence ID" value="AAW53388.1"/>
    <property type="molecule type" value="Genomic_DNA"/>
</dbReference>
<dbReference type="RefSeq" id="WP_001831768.1">
    <property type="nucleotide sequence ID" value="NC_002976.3"/>
</dbReference>
<dbReference type="SMR" id="Q5HS36"/>
<dbReference type="STRING" id="176279.SERP0003"/>
<dbReference type="KEGG" id="ser:SERP0003"/>
<dbReference type="eggNOG" id="COG0486">
    <property type="taxonomic scope" value="Bacteria"/>
</dbReference>
<dbReference type="HOGENOM" id="CLU_019624_4_1_9"/>
<dbReference type="Proteomes" id="UP000000531">
    <property type="component" value="Chromosome"/>
</dbReference>
<dbReference type="GO" id="GO:0005829">
    <property type="term" value="C:cytosol"/>
    <property type="evidence" value="ECO:0007669"/>
    <property type="project" value="TreeGrafter"/>
</dbReference>
<dbReference type="GO" id="GO:0005525">
    <property type="term" value="F:GTP binding"/>
    <property type="evidence" value="ECO:0007669"/>
    <property type="project" value="UniProtKB-UniRule"/>
</dbReference>
<dbReference type="GO" id="GO:0003924">
    <property type="term" value="F:GTPase activity"/>
    <property type="evidence" value="ECO:0007669"/>
    <property type="project" value="UniProtKB-UniRule"/>
</dbReference>
<dbReference type="GO" id="GO:0046872">
    <property type="term" value="F:metal ion binding"/>
    <property type="evidence" value="ECO:0007669"/>
    <property type="project" value="UniProtKB-KW"/>
</dbReference>
<dbReference type="GO" id="GO:0030488">
    <property type="term" value="P:tRNA methylation"/>
    <property type="evidence" value="ECO:0007669"/>
    <property type="project" value="TreeGrafter"/>
</dbReference>
<dbReference type="GO" id="GO:0002098">
    <property type="term" value="P:tRNA wobble uridine modification"/>
    <property type="evidence" value="ECO:0007669"/>
    <property type="project" value="TreeGrafter"/>
</dbReference>
<dbReference type="CDD" id="cd04164">
    <property type="entry name" value="trmE"/>
    <property type="match status" value="1"/>
</dbReference>
<dbReference type="CDD" id="cd14858">
    <property type="entry name" value="TrmE_N"/>
    <property type="match status" value="1"/>
</dbReference>
<dbReference type="FunFam" id="3.30.1360.120:FF:000003">
    <property type="entry name" value="tRNA modification GTPase MnmE"/>
    <property type="match status" value="1"/>
</dbReference>
<dbReference type="FunFam" id="3.40.50.300:FF:000494">
    <property type="entry name" value="tRNA modification GTPase MnmE"/>
    <property type="match status" value="1"/>
</dbReference>
<dbReference type="Gene3D" id="3.40.50.300">
    <property type="entry name" value="P-loop containing nucleotide triphosphate hydrolases"/>
    <property type="match status" value="1"/>
</dbReference>
<dbReference type="Gene3D" id="3.30.1360.120">
    <property type="entry name" value="Probable tRNA modification gtpase trme, domain 1"/>
    <property type="match status" value="1"/>
</dbReference>
<dbReference type="Gene3D" id="1.20.120.430">
    <property type="entry name" value="tRNA modification GTPase MnmE domain 2"/>
    <property type="match status" value="1"/>
</dbReference>
<dbReference type="HAMAP" id="MF_00379">
    <property type="entry name" value="GTPase_MnmE"/>
    <property type="match status" value="1"/>
</dbReference>
<dbReference type="InterPro" id="IPR031168">
    <property type="entry name" value="G_TrmE"/>
</dbReference>
<dbReference type="InterPro" id="IPR006073">
    <property type="entry name" value="GTP-bd"/>
</dbReference>
<dbReference type="InterPro" id="IPR018948">
    <property type="entry name" value="GTP-bd_TrmE_N"/>
</dbReference>
<dbReference type="InterPro" id="IPR004520">
    <property type="entry name" value="GTPase_MnmE"/>
</dbReference>
<dbReference type="InterPro" id="IPR027368">
    <property type="entry name" value="MnmE_dom2"/>
</dbReference>
<dbReference type="InterPro" id="IPR025867">
    <property type="entry name" value="MnmE_helical"/>
</dbReference>
<dbReference type="InterPro" id="IPR027417">
    <property type="entry name" value="P-loop_NTPase"/>
</dbReference>
<dbReference type="InterPro" id="IPR005225">
    <property type="entry name" value="Small_GTP-bd"/>
</dbReference>
<dbReference type="InterPro" id="IPR027266">
    <property type="entry name" value="TrmE/GcvT_dom1"/>
</dbReference>
<dbReference type="NCBIfam" id="TIGR00450">
    <property type="entry name" value="mnmE_trmE_thdF"/>
    <property type="match status" value="1"/>
</dbReference>
<dbReference type="NCBIfam" id="NF003661">
    <property type="entry name" value="PRK05291.1-3"/>
    <property type="match status" value="1"/>
</dbReference>
<dbReference type="NCBIfam" id="TIGR00231">
    <property type="entry name" value="small_GTP"/>
    <property type="match status" value="1"/>
</dbReference>
<dbReference type="PANTHER" id="PTHR42714">
    <property type="entry name" value="TRNA MODIFICATION GTPASE GTPBP3"/>
    <property type="match status" value="1"/>
</dbReference>
<dbReference type="PANTHER" id="PTHR42714:SF2">
    <property type="entry name" value="TRNA MODIFICATION GTPASE GTPBP3, MITOCHONDRIAL"/>
    <property type="match status" value="1"/>
</dbReference>
<dbReference type="Pfam" id="PF01926">
    <property type="entry name" value="MMR_HSR1"/>
    <property type="match status" value="1"/>
</dbReference>
<dbReference type="Pfam" id="PF12631">
    <property type="entry name" value="MnmE_helical"/>
    <property type="match status" value="1"/>
</dbReference>
<dbReference type="Pfam" id="PF10396">
    <property type="entry name" value="TrmE_N"/>
    <property type="match status" value="1"/>
</dbReference>
<dbReference type="PRINTS" id="PR00449">
    <property type="entry name" value="RASTRNSFRMNG"/>
</dbReference>
<dbReference type="SUPFAM" id="SSF52540">
    <property type="entry name" value="P-loop containing nucleoside triphosphate hydrolases"/>
    <property type="match status" value="1"/>
</dbReference>
<dbReference type="SUPFAM" id="SSF116878">
    <property type="entry name" value="TrmE connector domain"/>
    <property type="match status" value="1"/>
</dbReference>
<dbReference type="PROSITE" id="PS51709">
    <property type="entry name" value="G_TRME"/>
    <property type="match status" value="1"/>
</dbReference>
<organism>
    <name type="scientific">Staphylococcus epidermidis (strain ATCC 35984 / DSM 28319 / BCRC 17069 / CCUG 31568 / BM 3577 / RP62A)</name>
    <dbReference type="NCBI Taxonomy" id="176279"/>
    <lineage>
        <taxon>Bacteria</taxon>
        <taxon>Bacillati</taxon>
        <taxon>Bacillota</taxon>
        <taxon>Bacilli</taxon>
        <taxon>Bacillales</taxon>
        <taxon>Staphylococcaceae</taxon>
        <taxon>Staphylococcus</taxon>
    </lineage>
</organism>
<accession>Q5HS36</accession>
<name>MNME_STAEQ</name>
<proteinExistence type="inferred from homology"/>
<sequence length="459" mass="51452">MDFDTITSISTPMGEGAIGIVRLSGPQAIEIGDILYKGKKKLSEVETHTINYGHIIDPETNETVEEVMVSVLRAPKTFTREDIIEINCHGGILTINRILELTMTYGARMAEPGEYTKRAFLNGRIDLSQAEAVMDFIRSKTDRASKVAMNQIEGRLSDLIKKQRQSILEILAQVEVNIDYPEYDDVEDATTDFLLEQSKRIKEEINQLLETGAQGKIMREGLSTVIVGRPNVGKSSMLNNLIQDNKAIVTEVAGTTRDVLEEYVNVRGVPLRLVDTAGIRDTEDIVEKIGVERSRKALSEADLILFVLNNNEPLTEDDQTLFEVIKNEDVIVIINKTDLEQRLDVSELREMIGDMPLIQTSMLKQEGIDELEIQIKDLFFGGEVQNQDMTYVSNSRHISLLKQARQSIQDAIDAAESGIPMDMVQIDLTRTWEILGEIIGESASDELIDQLFSQFCLGK</sequence>
<comment type="function">
    <text evidence="1">Exhibits a very high intrinsic GTPase hydrolysis rate. Involved in the addition of a carboxymethylaminomethyl (cmnm) group at the wobble position (U34) of certain tRNAs, forming tRNA-cmnm(5)s(2)U34.</text>
</comment>
<comment type="cofactor">
    <cofactor evidence="1">
        <name>K(+)</name>
        <dbReference type="ChEBI" id="CHEBI:29103"/>
    </cofactor>
    <text evidence="1">Binds 1 potassium ion per subunit.</text>
</comment>
<comment type="subunit">
    <text evidence="1">Homodimer. Heterotetramer of two MnmE and two MnmG subunits.</text>
</comment>
<comment type="subcellular location">
    <subcellularLocation>
        <location evidence="1">Cytoplasm</location>
    </subcellularLocation>
</comment>
<comment type="similarity">
    <text evidence="1">Belongs to the TRAFAC class TrmE-Era-EngA-EngB-Septin-like GTPase superfamily. TrmE GTPase family.</text>
</comment>
<feature type="chain" id="PRO_0000188922" description="tRNA modification GTPase MnmE">
    <location>
        <begin position="1"/>
        <end position="459"/>
    </location>
</feature>
<feature type="domain" description="TrmE-type G">
    <location>
        <begin position="221"/>
        <end position="380"/>
    </location>
</feature>
<feature type="binding site" evidence="1">
    <location>
        <position position="22"/>
    </location>
    <ligand>
        <name>(6S)-5-formyl-5,6,7,8-tetrahydrofolate</name>
        <dbReference type="ChEBI" id="CHEBI:57457"/>
    </ligand>
</feature>
<feature type="binding site" evidence="1">
    <location>
        <position position="85"/>
    </location>
    <ligand>
        <name>(6S)-5-formyl-5,6,7,8-tetrahydrofolate</name>
        <dbReference type="ChEBI" id="CHEBI:57457"/>
    </ligand>
</feature>
<feature type="binding site" evidence="1">
    <location>
        <position position="124"/>
    </location>
    <ligand>
        <name>(6S)-5-formyl-5,6,7,8-tetrahydrofolate</name>
        <dbReference type="ChEBI" id="CHEBI:57457"/>
    </ligand>
</feature>
<feature type="binding site" evidence="1">
    <location>
        <begin position="231"/>
        <end position="236"/>
    </location>
    <ligand>
        <name>GTP</name>
        <dbReference type="ChEBI" id="CHEBI:37565"/>
    </ligand>
</feature>
<feature type="binding site" evidence="1">
    <location>
        <position position="231"/>
    </location>
    <ligand>
        <name>K(+)</name>
        <dbReference type="ChEBI" id="CHEBI:29103"/>
    </ligand>
</feature>
<feature type="binding site" evidence="1">
    <location>
        <position position="235"/>
    </location>
    <ligand>
        <name>Mg(2+)</name>
        <dbReference type="ChEBI" id="CHEBI:18420"/>
    </ligand>
</feature>
<feature type="binding site" evidence="1">
    <location>
        <begin position="250"/>
        <end position="256"/>
    </location>
    <ligand>
        <name>GTP</name>
        <dbReference type="ChEBI" id="CHEBI:37565"/>
    </ligand>
</feature>
<feature type="binding site" evidence="1">
    <location>
        <position position="250"/>
    </location>
    <ligand>
        <name>K(+)</name>
        <dbReference type="ChEBI" id="CHEBI:29103"/>
    </ligand>
</feature>
<feature type="binding site" evidence="1">
    <location>
        <position position="252"/>
    </location>
    <ligand>
        <name>K(+)</name>
        <dbReference type="ChEBI" id="CHEBI:29103"/>
    </ligand>
</feature>
<feature type="binding site" evidence="1">
    <location>
        <position position="255"/>
    </location>
    <ligand>
        <name>K(+)</name>
        <dbReference type="ChEBI" id="CHEBI:29103"/>
    </ligand>
</feature>
<feature type="binding site" evidence="1">
    <location>
        <position position="256"/>
    </location>
    <ligand>
        <name>Mg(2+)</name>
        <dbReference type="ChEBI" id="CHEBI:18420"/>
    </ligand>
</feature>
<feature type="binding site" evidence="1">
    <location>
        <begin position="275"/>
        <end position="278"/>
    </location>
    <ligand>
        <name>GTP</name>
        <dbReference type="ChEBI" id="CHEBI:37565"/>
    </ligand>
</feature>
<feature type="binding site" evidence="1">
    <location>
        <position position="459"/>
    </location>
    <ligand>
        <name>(6S)-5-formyl-5,6,7,8-tetrahydrofolate</name>
        <dbReference type="ChEBI" id="CHEBI:57457"/>
    </ligand>
</feature>
<keyword id="KW-0963">Cytoplasm</keyword>
<keyword id="KW-0342">GTP-binding</keyword>
<keyword id="KW-0378">Hydrolase</keyword>
<keyword id="KW-0460">Magnesium</keyword>
<keyword id="KW-0479">Metal-binding</keyword>
<keyword id="KW-0547">Nucleotide-binding</keyword>
<keyword id="KW-0630">Potassium</keyword>
<keyword id="KW-1185">Reference proteome</keyword>
<keyword id="KW-0819">tRNA processing</keyword>
<protein>
    <recommendedName>
        <fullName evidence="1">tRNA modification GTPase MnmE</fullName>
        <ecNumber evidence="1">3.6.-.-</ecNumber>
    </recommendedName>
</protein>
<reference key="1">
    <citation type="journal article" date="2005" name="J. Bacteriol.">
        <title>Insights on evolution of virulence and resistance from the complete genome analysis of an early methicillin-resistant Staphylococcus aureus strain and a biofilm-producing methicillin-resistant Staphylococcus epidermidis strain.</title>
        <authorList>
            <person name="Gill S.R."/>
            <person name="Fouts D.E."/>
            <person name="Archer G.L."/>
            <person name="Mongodin E.F."/>
            <person name="DeBoy R.T."/>
            <person name="Ravel J."/>
            <person name="Paulsen I.T."/>
            <person name="Kolonay J.F."/>
            <person name="Brinkac L.M."/>
            <person name="Beanan M.J."/>
            <person name="Dodson R.J."/>
            <person name="Daugherty S.C."/>
            <person name="Madupu R."/>
            <person name="Angiuoli S.V."/>
            <person name="Durkin A.S."/>
            <person name="Haft D.H."/>
            <person name="Vamathevan J.J."/>
            <person name="Khouri H."/>
            <person name="Utterback T.R."/>
            <person name="Lee C."/>
            <person name="Dimitrov G."/>
            <person name="Jiang L."/>
            <person name="Qin H."/>
            <person name="Weidman J."/>
            <person name="Tran K."/>
            <person name="Kang K.H."/>
            <person name="Hance I.R."/>
            <person name="Nelson K.E."/>
            <person name="Fraser C.M."/>
        </authorList>
    </citation>
    <scope>NUCLEOTIDE SEQUENCE [LARGE SCALE GENOMIC DNA]</scope>
    <source>
        <strain>ATCC 35984 / DSM 28319 / BCRC 17069 / CCUG 31568 / BM 3577 / RP62A</strain>
    </source>
</reference>
<evidence type="ECO:0000255" key="1">
    <source>
        <dbReference type="HAMAP-Rule" id="MF_00379"/>
    </source>
</evidence>